<proteinExistence type="inferred from homology"/>
<protein>
    <recommendedName>
        <fullName evidence="1">UPF0735 ACT domain-containing protein NWMN_1545</fullName>
    </recommendedName>
</protein>
<gene>
    <name type="ordered locus">NWMN_1545</name>
</gene>
<comment type="similarity">
    <text evidence="1">Belongs to the UPF0735 family.</text>
</comment>
<organism>
    <name type="scientific">Staphylococcus aureus (strain Newman)</name>
    <dbReference type="NCBI Taxonomy" id="426430"/>
    <lineage>
        <taxon>Bacteria</taxon>
        <taxon>Bacillati</taxon>
        <taxon>Bacillota</taxon>
        <taxon>Bacilli</taxon>
        <taxon>Bacillales</taxon>
        <taxon>Staphylococcaceae</taxon>
        <taxon>Staphylococcus</taxon>
    </lineage>
</organism>
<accession>A6QHI5</accession>
<reference key="1">
    <citation type="journal article" date="2008" name="J. Bacteriol.">
        <title>Genome sequence of Staphylococcus aureus strain Newman and comparative analysis of staphylococcal genomes: polymorphism and evolution of two major pathogenicity islands.</title>
        <authorList>
            <person name="Baba T."/>
            <person name="Bae T."/>
            <person name="Schneewind O."/>
            <person name="Takeuchi F."/>
            <person name="Hiramatsu K."/>
        </authorList>
    </citation>
    <scope>NUCLEOTIDE SEQUENCE [LARGE SCALE GENOMIC DNA]</scope>
    <source>
        <strain>Newman</strain>
    </source>
</reference>
<name>Y1545_STAAE</name>
<evidence type="ECO:0000255" key="1">
    <source>
        <dbReference type="HAMAP-Rule" id="MF_00707"/>
    </source>
</evidence>
<dbReference type="EMBL" id="AP009351">
    <property type="protein sequence ID" value="BAF67817.1"/>
    <property type="molecule type" value="Genomic_DNA"/>
</dbReference>
<dbReference type="KEGG" id="sae:NWMN_1545"/>
<dbReference type="HOGENOM" id="CLU_128147_0_0_9"/>
<dbReference type="Proteomes" id="UP000006386">
    <property type="component" value="Chromosome"/>
</dbReference>
<dbReference type="Gene3D" id="3.30.70.260">
    <property type="match status" value="1"/>
</dbReference>
<dbReference type="HAMAP" id="MF_00707">
    <property type="entry name" value="UPF0735"/>
    <property type="match status" value="1"/>
</dbReference>
<dbReference type="InterPro" id="IPR045865">
    <property type="entry name" value="ACT-like_dom_sf"/>
</dbReference>
<dbReference type="InterPro" id="IPR002912">
    <property type="entry name" value="ACT_dom"/>
</dbReference>
<dbReference type="InterPro" id="IPR008310">
    <property type="entry name" value="UPF0735_ACT_dom-cont"/>
</dbReference>
<dbReference type="NCBIfam" id="NF003361">
    <property type="entry name" value="PRK04435.1"/>
    <property type="match status" value="1"/>
</dbReference>
<dbReference type="PIRSF" id="PIRSF025624">
    <property type="entry name" value="ACT_PheB"/>
    <property type="match status" value="1"/>
</dbReference>
<dbReference type="SUPFAM" id="SSF55021">
    <property type="entry name" value="ACT-like"/>
    <property type="match status" value="1"/>
</dbReference>
<dbReference type="PROSITE" id="PS51671">
    <property type="entry name" value="ACT"/>
    <property type="match status" value="1"/>
</dbReference>
<feature type="chain" id="PRO_1000072763" description="UPF0735 ACT domain-containing protein NWMN_1545">
    <location>
        <begin position="1"/>
        <end position="152"/>
    </location>
</feature>
<feature type="domain" description="ACT" evidence="1">
    <location>
        <begin position="75"/>
        <end position="150"/>
    </location>
</feature>
<sequence length="152" mass="17474">MMDNKDYKKFYLIREDVLPESVVKTLKIKDALKSDPTLSIYDAVKQFDLSRSAFYKYRETIFPVDDKMLDHREFTLILYVTDIVGMLARVLDVISKLELSVLTIHQSIPMEEKATITLSLNAKSKETSVEDVIGALRNLDYVSKVELISMSM</sequence>